<evidence type="ECO:0000255" key="1"/>
<evidence type="ECO:0000255" key="2">
    <source>
        <dbReference type="PROSITE-ProRule" id="PRU00283"/>
    </source>
</evidence>
<evidence type="ECO:0000256" key="3">
    <source>
        <dbReference type="SAM" id="MobiDB-lite"/>
    </source>
</evidence>
<evidence type="ECO:0000303" key="4">
    <source>
    </source>
</evidence>
<evidence type="ECO:0000305" key="5"/>
<evidence type="ECO:0000312" key="6">
    <source>
        <dbReference type="Araport" id="AT2G22610"/>
    </source>
</evidence>
<evidence type="ECO:0000312" key="7">
    <source>
        <dbReference type="EMBL" id="AAD15569.1"/>
    </source>
</evidence>
<dbReference type="EMBL" id="AC006340">
    <property type="protein sequence ID" value="AAD15569.1"/>
    <property type="status" value="ALT_SEQ"/>
    <property type="molecule type" value="Genomic_DNA"/>
</dbReference>
<dbReference type="EMBL" id="CP002685">
    <property type="protein sequence ID" value="AEC07327.1"/>
    <property type="molecule type" value="Genomic_DNA"/>
</dbReference>
<dbReference type="EMBL" id="CP002685">
    <property type="protein sequence ID" value="AEC07328.1"/>
    <property type="molecule type" value="Genomic_DNA"/>
</dbReference>
<dbReference type="PIR" id="F84614">
    <property type="entry name" value="F84614"/>
</dbReference>
<dbReference type="RefSeq" id="NP_001189577.1">
    <molecule id="F4IJK6-2"/>
    <property type="nucleotide sequence ID" value="NM_001202648.1"/>
</dbReference>
<dbReference type="RefSeq" id="NP_179846.3">
    <molecule id="F4IJK6-1"/>
    <property type="nucleotide sequence ID" value="NM_127826.5"/>
</dbReference>
<dbReference type="SMR" id="F4IJK6"/>
<dbReference type="FunCoup" id="F4IJK6">
    <property type="interactions" value="288"/>
</dbReference>
<dbReference type="STRING" id="3702.F4IJK6"/>
<dbReference type="PaxDb" id="3702-AT2G22610.1"/>
<dbReference type="EnsemblPlants" id="AT2G22610.1">
    <molecule id="F4IJK6-1"/>
    <property type="protein sequence ID" value="AT2G22610.1"/>
    <property type="gene ID" value="AT2G22610"/>
</dbReference>
<dbReference type="EnsemblPlants" id="AT2G22610.2">
    <molecule id="F4IJK6-2"/>
    <property type="protein sequence ID" value="AT2G22610.2"/>
    <property type="gene ID" value="AT2G22610"/>
</dbReference>
<dbReference type="GeneID" id="816792"/>
<dbReference type="Gramene" id="AT2G22610.1">
    <molecule id="F4IJK6-1"/>
    <property type="protein sequence ID" value="AT2G22610.1"/>
    <property type="gene ID" value="AT2G22610"/>
</dbReference>
<dbReference type="Gramene" id="AT2G22610.2">
    <molecule id="F4IJK6-2"/>
    <property type="protein sequence ID" value="AT2G22610.2"/>
    <property type="gene ID" value="AT2G22610"/>
</dbReference>
<dbReference type="KEGG" id="ath:AT2G22610"/>
<dbReference type="Araport" id="AT2G22610"/>
<dbReference type="TAIR" id="AT2G22610">
    <property type="gene designation" value="MDKIN2"/>
</dbReference>
<dbReference type="eggNOG" id="KOG0239">
    <property type="taxonomic scope" value="Eukaryota"/>
</dbReference>
<dbReference type="HOGENOM" id="CLU_006519_0_1_1"/>
<dbReference type="InParanoid" id="F4IJK6"/>
<dbReference type="OMA" id="DECYQSW"/>
<dbReference type="PRO" id="PR:F4IJK6"/>
<dbReference type="Proteomes" id="UP000006548">
    <property type="component" value="Chromosome 2"/>
</dbReference>
<dbReference type="ExpressionAtlas" id="F4IJK6">
    <property type="expression patterns" value="baseline and differential"/>
</dbReference>
<dbReference type="GO" id="GO:0005874">
    <property type="term" value="C:microtubule"/>
    <property type="evidence" value="ECO:0007669"/>
    <property type="project" value="UniProtKB-KW"/>
</dbReference>
<dbReference type="GO" id="GO:0005634">
    <property type="term" value="C:nucleus"/>
    <property type="evidence" value="ECO:0000314"/>
    <property type="project" value="TAIR"/>
</dbReference>
<dbReference type="GO" id="GO:0005524">
    <property type="term" value="F:ATP binding"/>
    <property type="evidence" value="ECO:0007669"/>
    <property type="project" value="UniProtKB-KW"/>
</dbReference>
<dbReference type="GO" id="GO:0008017">
    <property type="term" value="F:microtubule binding"/>
    <property type="evidence" value="ECO:0007669"/>
    <property type="project" value="InterPro"/>
</dbReference>
<dbReference type="GO" id="GO:0003777">
    <property type="term" value="F:microtubule motor activity"/>
    <property type="evidence" value="ECO:0007669"/>
    <property type="project" value="InterPro"/>
</dbReference>
<dbReference type="GO" id="GO:0007018">
    <property type="term" value="P:microtubule-based movement"/>
    <property type="evidence" value="ECO:0007669"/>
    <property type="project" value="InterPro"/>
</dbReference>
<dbReference type="CDD" id="cd01366">
    <property type="entry name" value="KISc_C_terminal"/>
    <property type="match status" value="1"/>
</dbReference>
<dbReference type="FunFam" id="2.60.120.430:FF:000016">
    <property type="entry name" value="Kinesin-like protein KIN-14R"/>
    <property type="match status" value="1"/>
</dbReference>
<dbReference type="FunFam" id="3.40.850.10:FF:000057">
    <property type="entry name" value="kinesin-like protein KIN-14R"/>
    <property type="match status" value="1"/>
</dbReference>
<dbReference type="Gene3D" id="2.60.120.430">
    <property type="entry name" value="Galactose-binding lectin"/>
    <property type="match status" value="1"/>
</dbReference>
<dbReference type="Gene3D" id="3.40.850.10">
    <property type="entry name" value="Kinesin motor domain"/>
    <property type="match status" value="1"/>
</dbReference>
<dbReference type="InterPro" id="IPR027640">
    <property type="entry name" value="Kinesin-like_fam"/>
</dbReference>
<dbReference type="InterPro" id="IPR019821">
    <property type="entry name" value="Kinesin_motor_CS"/>
</dbReference>
<dbReference type="InterPro" id="IPR001752">
    <property type="entry name" value="Kinesin_motor_dom"/>
</dbReference>
<dbReference type="InterPro" id="IPR036961">
    <property type="entry name" value="Kinesin_motor_dom_sf"/>
</dbReference>
<dbReference type="InterPro" id="IPR021720">
    <property type="entry name" value="Malectin_dom"/>
</dbReference>
<dbReference type="InterPro" id="IPR027417">
    <property type="entry name" value="P-loop_NTPase"/>
</dbReference>
<dbReference type="PANTHER" id="PTHR47972:SF18">
    <property type="entry name" value="KINESIN-LIKE PROTEIN KIN-14R"/>
    <property type="match status" value="1"/>
</dbReference>
<dbReference type="PANTHER" id="PTHR47972">
    <property type="entry name" value="KINESIN-LIKE PROTEIN KLP-3"/>
    <property type="match status" value="1"/>
</dbReference>
<dbReference type="Pfam" id="PF00225">
    <property type="entry name" value="Kinesin"/>
    <property type="match status" value="1"/>
</dbReference>
<dbReference type="Pfam" id="PF11721">
    <property type="entry name" value="Malectin"/>
    <property type="match status" value="1"/>
</dbReference>
<dbReference type="PRINTS" id="PR00380">
    <property type="entry name" value="KINESINHEAVY"/>
</dbReference>
<dbReference type="SMART" id="SM00129">
    <property type="entry name" value="KISc"/>
    <property type="match status" value="1"/>
</dbReference>
<dbReference type="SUPFAM" id="SSF52540">
    <property type="entry name" value="P-loop containing nucleoside triphosphate hydrolases"/>
    <property type="match status" value="1"/>
</dbReference>
<dbReference type="PROSITE" id="PS00411">
    <property type="entry name" value="KINESIN_MOTOR_1"/>
    <property type="match status" value="1"/>
</dbReference>
<dbReference type="PROSITE" id="PS50067">
    <property type="entry name" value="KINESIN_MOTOR_2"/>
    <property type="match status" value="1"/>
</dbReference>
<organism>
    <name type="scientific">Arabidopsis thaliana</name>
    <name type="common">Mouse-ear cress</name>
    <dbReference type="NCBI Taxonomy" id="3702"/>
    <lineage>
        <taxon>Eukaryota</taxon>
        <taxon>Viridiplantae</taxon>
        <taxon>Streptophyta</taxon>
        <taxon>Embryophyta</taxon>
        <taxon>Tracheophyta</taxon>
        <taxon>Spermatophyta</taxon>
        <taxon>Magnoliopsida</taxon>
        <taxon>eudicotyledons</taxon>
        <taxon>Gunneridae</taxon>
        <taxon>Pentapetalae</taxon>
        <taxon>rosids</taxon>
        <taxon>malvids</taxon>
        <taxon>Brassicales</taxon>
        <taxon>Brassicaceae</taxon>
        <taxon>Camelineae</taxon>
        <taxon>Arabidopsis</taxon>
    </lineage>
</organism>
<accession>F4IJK6</accession>
<accession>F4IJK7</accession>
<accession>Q9ZQ52</accession>
<reference key="1">
    <citation type="journal article" date="1999" name="Nature">
        <title>Sequence and analysis of chromosome 2 of the plant Arabidopsis thaliana.</title>
        <authorList>
            <person name="Lin X."/>
            <person name="Kaul S."/>
            <person name="Rounsley S.D."/>
            <person name="Shea T.P."/>
            <person name="Benito M.-I."/>
            <person name="Town C.D."/>
            <person name="Fujii C.Y."/>
            <person name="Mason T.M."/>
            <person name="Bowman C.L."/>
            <person name="Barnstead M.E."/>
            <person name="Feldblyum T.V."/>
            <person name="Buell C.R."/>
            <person name="Ketchum K.A."/>
            <person name="Lee J.J."/>
            <person name="Ronning C.M."/>
            <person name="Koo H.L."/>
            <person name="Moffat K.S."/>
            <person name="Cronin L.A."/>
            <person name="Shen M."/>
            <person name="Pai G."/>
            <person name="Van Aken S."/>
            <person name="Umayam L."/>
            <person name="Tallon L.J."/>
            <person name="Gill J.E."/>
            <person name="Adams M.D."/>
            <person name="Carrera A.J."/>
            <person name="Creasy T.H."/>
            <person name="Goodman H.M."/>
            <person name="Somerville C.R."/>
            <person name="Copenhaver G.P."/>
            <person name="Preuss D."/>
            <person name="Nierman W.C."/>
            <person name="White O."/>
            <person name="Eisen J.A."/>
            <person name="Salzberg S.L."/>
            <person name="Fraser C.M."/>
            <person name="Venter J.C."/>
        </authorList>
    </citation>
    <scope>NUCLEOTIDE SEQUENCE [LARGE SCALE GENOMIC DNA]</scope>
    <source>
        <strain>cv. Columbia</strain>
    </source>
</reference>
<reference key="2">
    <citation type="journal article" date="2017" name="Plant J.">
        <title>Araport11: a complete reannotation of the Arabidopsis thaliana reference genome.</title>
        <authorList>
            <person name="Cheng C.Y."/>
            <person name="Krishnakumar V."/>
            <person name="Chan A.P."/>
            <person name="Thibaud-Nissen F."/>
            <person name="Schobel S."/>
            <person name="Town C.D."/>
        </authorList>
    </citation>
    <scope>GENOME REANNOTATION</scope>
    <source>
        <strain>cv. Columbia</strain>
    </source>
</reference>
<reference key="3">
    <citation type="journal article" date="2001" name="BMC Genomics">
        <title>Kinesins in the Arabidopsis genome: a comparative analysis among eukaryotes.</title>
        <authorList>
            <person name="Reddy A.S."/>
            <person name="Day I.S."/>
        </authorList>
    </citation>
    <scope>GENE FAMILY</scope>
</reference>
<reference key="4">
    <citation type="journal article" date="2006" name="BMC Genomics">
        <title>Comprehensive comparative analysis of kinesins in photosynthetic eukaryotes.</title>
        <authorList>
            <person name="Richardson D.N."/>
            <person name="Simmons M.P."/>
            <person name="Reddy A.S."/>
        </authorList>
    </citation>
    <scope>GENE FAMILY</scope>
    <scope>NOMENCLATURE</scope>
</reference>
<reference key="5">
    <citation type="journal article" date="2012" name="Protoplasma">
        <title>Functions of the Arabidopsis kinesin superfamily of microtubule-based motor proteins.</title>
        <authorList>
            <person name="Zhu C."/>
            <person name="Dixit R."/>
        </authorList>
    </citation>
    <scope>REVIEW</scope>
</reference>
<protein>
    <recommendedName>
        <fullName evidence="5">Kinesin-like protein KIN-14R</fullName>
    </recommendedName>
</protein>
<feature type="chain" id="PRO_0000438051" description="Kinesin-like protein KIN-14R">
    <location>
        <begin position="1"/>
        <end position="1083"/>
    </location>
</feature>
<feature type="domain" description="Kinesin motor" evidence="2">
    <location>
        <begin position="417"/>
        <end position="739"/>
    </location>
</feature>
<feature type="region of interest" description="Disordered" evidence="3">
    <location>
        <begin position="967"/>
        <end position="1083"/>
    </location>
</feature>
<feature type="coiled-coil region" evidence="1">
    <location>
        <begin position="264"/>
        <end position="418"/>
    </location>
</feature>
<feature type="coiled-coil region" evidence="1">
    <location>
        <begin position="746"/>
        <end position="876"/>
    </location>
</feature>
<feature type="coiled-coil region" evidence="1">
    <location>
        <begin position="905"/>
        <end position="947"/>
    </location>
</feature>
<feature type="compositionally biased region" description="Polar residues" evidence="3">
    <location>
        <begin position="971"/>
        <end position="985"/>
    </location>
</feature>
<feature type="compositionally biased region" description="Basic and acidic residues" evidence="3">
    <location>
        <begin position="1020"/>
        <end position="1032"/>
    </location>
</feature>
<feature type="compositionally biased region" description="Polar residues" evidence="3">
    <location>
        <begin position="1044"/>
        <end position="1054"/>
    </location>
</feature>
<feature type="compositionally biased region" description="Basic and acidic residues" evidence="3">
    <location>
        <begin position="1062"/>
        <end position="1083"/>
    </location>
</feature>
<feature type="binding site" evidence="2">
    <location>
        <begin position="500"/>
        <end position="507"/>
    </location>
    <ligand>
        <name>ATP</name>
        <dbReference type="ChEBI" id="CHEBI:30616"/>
    </ligand>
</feature>
<feature type="splice variant" id="VSP_058608" description="In isoform 2.">
    <location>
        <begin position="861"/>
        <end position="881"/>
    </location>
</feature>
<keyword id="KW-0025">Alternative splicing</keyword>
<keyword id="KW-0067">ATP-binding</keyword>
<keyword id="KW-0175">Coiled coil</keyword>
<keyword id="KW-0493">Microtubule</keyword>
<keyword id="KW-0505">Motor protein</keyword>
<keyword id="KW-0547">Nucleotide-binding</keyword>
<keyword id="KW-1185">Reference proteome</keyword>
<gene>
    <name evidence="5" type="primary">KIN14R</name>
    <name evidence="6" type="ordered locus">At2g22610</name>
    <name evidence="7" type="ORF">T9I22.5</name>
</gene>
<sequence length="1083" mass="122922">MDDVQIDDTFPVDLNGVTSLCSPEIPSFDFVSDETEKLEIGDTSIDDCDDALGDSMVCDPNSRLVPTGLTRTNRTDETIMFINAGGDDSKVLDSELNISRDDYFEGGDVLRTEESIVEAGDFPFIYQSARVGNFCYQLNNLLPGEYLIDFHFAEIINTNGPKGIRVFNVYVQDEKATEFDIFSVVGANRPLLLVDLRVMVMDDGLIRVRFEGINGSPVVCGICLRKAPQVSVPRTSQDFIKCENCATEIEISPTRKRLMRAKAHDKYEKKIAELSERYEHKTNECHEAWMSLTSANEQLEKVMMELNNKIYQARSLDQTVITQADCLKSITRKYENDKRHWATAIDSLQEKIEIMKREQSQLSQEAHECVEGIPELYKMVGGVQALVSQCEDLKQKYSEEQAKRKELYNHIQETKGNIRVFCRCRPLNTEETSTKSATIVDFDGAKDGELGVITGNNSKKSFKFDRVYTPKDGQVDVFADASPMVVSVLDGYNVCIFAYGQTGTGKTFTMEGTPQNRGVNYRTVEQLFEVARERRETISYNISVSVLEVYNEQIRDLLATSPGSKKLEIKQSSDGSHHVPGLVEANVENINEVWNVLQAGSNARSVGSNNVNEHSSRSHCMLSIMVKAKNLMNGDCTKSKLWLVDLAGSERLAKTDVQGERLKEAQNINRSLSALGDVIYALATKSSHIPYRNSKLTHLLQDSLGGDSKTLMFVQISPSEHDVSETLSSLNFATRVRGVELGPARKQVDTGEIQKLKAMVEKARQESRSKDESIKKMEENIQNLEGKNKGRDNSYRSLQEKNKDLQNQLDSVHNQSEKQYAQLQERLKSRDEICSNLQQKVKELECKLRERHQSDSAANNQKVKDLENNLKESEGSSLVWQQKVKDYENKLKESEGNSLVWQQKIKELEIKHKDEQSQEAVLLRQKIKELEMRLKEQEKHIQEMATTREFPEVANATPNEVKTCFKEDNFGNENMESNTNILRTSNRLKTKRHDSLNLNEMTRKKRASRSGETENNGDDPQMKEKRIRKSDPPKVFSRVVRPTRTASGSSSQVPVAQKRVIKREQQEVPVVKERDSKKKIWSR</sequence>
<proteinExistence type="inferred from homology"/>
<name>KN14R_ARATH</name>
<comment type="alternative products">
    <event type="alternative splicing"/>
    <isoform>
        <id>F4IJK6-1</id>
        <name>1</name>
        <sequence type="displayed"/>
    </isoform>
    <isoform>
        <id>F4IJK6-2</id>
        <name>2</name>
        <sequence type="described" ref="VSP_058608"/>
    </isoform>
</comment>
<comment type="similarity">
    <text evidence="4">Belongs to the TRAFAC class myosin-kinesin ATPase superfamily. Kinesin family. KIN-14 subfamily.</text>
</comment>
<comment type="sequence caution" evidence="5">
    <conflict type="erroneous gene model prediction">
        <sequence resource="EMBL-CDS" id="AAD15569"/>
    </conflict>
</comment>